<keyword id="KW-0119">Carbohydrate metabolism</keyword>
<keyword id="KW-0378">Hydrolase</keyword>
<keyword id="KW-0464">Manganese</keyword>
<reference key="1">
    <citation type="journal article" date="2007" name="BMC Microbiol.">
        <title>Subtle genetic changes enhance virulence of methicillin resistant and sensitive Staphylococcus aureus.</title>
        <authorList>
            <person name="Highlander S.K."/>
            <person name="Hulten K.G."/>
            <person name="Qin X."/>
            <person name="Jiang H."/>
            <person name="Yerrapragada S."/>
            <person name="Mason E.O. Jr."/>
            <person name="Shang Y."/>
            <person name="Williams T.M."/>
            <person name="Fortunov R.M."/>
            <person name="Liu Y."/>
            <person name="Igboeli O."/>
            <person name="Petrosino J."/>
            <person name="Tirumalai M."/>
            <person name="Uzman A."/>
            <person name="Fox G.E."/>
            <person name="Cardenas A.M."/>
            <person name="Muzny D.M."/>
            <person name="Hemphill L."/>
            <person name="Ding Y."/>
            <person name="Dugan S."/>
            <person name="Blyth P.R."/>
            <person name="Buhay C.J."/>
            <person name="Dinh H.H."/>
            <person name="Hawes A.C."/>
            <person name="Holder M."/>
            <person name="Kovar C.L."/>
            <person name="Lee S.L."/>
            <person name="Liu W."/>
            <person name="Nazareth L.V."/>
            <person name="Wang Q."/>
            <person name="Zhou J."/>
            <person name="Kaplan S.L."/>
            <person name="Weinstock G.M."/>
        </authorList>
    </citation>
    <scope>NUCLEOTIDE SEQUENCE [LARGE SCALE GENOMIC DNA]</scope>
    <source>
        <strain>USA300 / TCH1516</strain>
    </source>
</reference>
<name>F16PC_STAAT</name>
<feature type="chain" id="PRO_0000359994" description="Fructose-1,6-bisphosphatase class 3">
    <location>
        <begin position="1"/>
        <end position="654"/>
    </location>
</feature>
<feature type="region of interest" description="Disordered" evidence="2">
    <location>
        <begin position="288"/>
        <end position="307"/>
    </location>
</feature>
<feature type="compositionally biased region" description="Basic and acidic residues" evidence="2">
    <location>
        <begin position="298"/>
        <end position="307"/>
    </location>
</feature>
<gene>
    <name evidence="1" type="primary">fbp</name>
    <name type="ordered locus">USA300HOU_2505</name>
</gene>
<sequence>MTQITEKELKKKYLDLLSQNFDTPEKLATEIINLESILELPKGTEHFVSDLHGEYEAFQHVLRNGSGNVRAKINDIFKERLSTKELNDLTALVYYPEDKLKLIKSDFQNCGQLNVWYITTIEHLIELIKYCSSKYTRSKLRKALPKQYVYIIEELLYKSNEYQNKKSYYETLVNQVIELKQADDLIIGLAYSVQRLVVDHLHVVGDIYDRGPQPDKIMDTLINYHSLDIQWGNHDVLWVGAYAGSKVCLANLLRICARYDNLDIIEDAYGINLRPLLTLAEKYYDADNPAFKPKKRPDKHERLTQREESQITKIHQAIAMIQFKLEIPIIKRRPNFEMEERLVLEKVNYDTNEITVYGNTYPLKDTCFQTVNRDNPAELLPEEEEVMNKLLLSFQQSEKLRRHMSFLMRKGSLYLPYNGNLLIHGCIPVDENGEMESFEIDGHTYSGQELLDVFEYHVRKSFDEKENTDDLSTDLVWYLWTGKYSSLFGKRAMTTFERYFIADKASHKEEKNPYYHLREDVNMVRKMLSDFGLNPDEGRIINGHTPVKEINGEDPIKADGKMLVIDGGFSKAYQSTTGIAGYTLLYNSFGMQLVAHQQFNAKEKILSEGIDELSIKRVVDKELQRKKIRDTNIGKDLQAQIDILKMLMHDRYLD</sequence>
<evidence type="ECO:0000255" key="1">
    <source>
        <dbReference type="HAMAP-Rule" id="MF_01854"/>
    </source>
</evidence>
<evidence type="ECO:0000256" key="2">
    <source>
        <dbReference type="SAM" id="MobiDB-lite"/>
    </source>
</evidence>
<proteinExistence type="inferred from homology"/>
<protein>
    <recommendedName>
        <fullName evidence="1">Fructose-1,6-bisphosphatase class 3</fullName>
        <shortName evidence="1">FBPase class 3</shortName>
        <ecNumber evidence="1">3.1.3.11</ecNumber>
    </recommendedName>
    <alternativeName>
        <fullName evidence="1">D-fructose-1,6-bisphosphate 1-phosphohydrolase class 3</fullName>
    </alternativeName>
</protein>
<organism>
    <name type="scientific">Staphylococcus aureus (strain USA300 / TCH1516)</name>
    <dbReference type="NCBI Taxonomy" id="451516"/>
    <lineage>
        <taxon>Bacteria</taxon>
        <taxon>Bacillati</taxon>
        <taxon>Bacillota</taxon>
        <taxon>Bacilli</taxon>
        <taxon>Bacillales</taxon>
        <taxon>Staphylococcaceae</taxon>
        <taxon>Staphylococcus</taxon>
    </lineage>
</organism>
<comment type="catalytic activity">
    <reaction evidence="1">
        <text>beta-D-fructose 1,6-bisphosphate + H2O = beta-D-fructose 6-phosphate + phosphate</text>
        <dbReference type="Rhea" id="RHEA:11064"/>
        <dbReference type="ChEBI" id="CHEBI:15377"/>
        <dbReference type="ChEBI" id="CHEBI:32966"/>
        <dbReference type="ChEBI" id="CHEBI:43474"/>
        <dbReference type="ChEBI" id="CHEBI:57634"/>
        <dbReference type="EC" id="3.1.3.11"/>
    </reaction>
</comment>
<comment type="cofactor">
    <cofactor evidence="1">
        <name>Mn(2+)</name>
        <dbReference type="ChEBI" id="CHEBI:29035"/>
    </cofactor>
</comment>
<comment type="pathway">
    <text evidence="1">Carbohydrate biosynthesis; gluconeogenesis.</text>
</comment>
<comment type="similarity">
    <text evidence="1">Belongs to the FBPase class 3 family.</text>
</comment>
<accession>A8Z3B1</accession>
<dbReference type="EC" id="3.1.3.11" evidence="1"/>
<dbReference type="EMBL" id="CP000730">
    <property type="protein sequence ID" value="ABX30491.1"/>
    <property type="molecule type" value="Genomic_DNA"/>
</dbReference>
<dbReference type="RefSeq" id="WP_000192168.1">
    <property type="nucleotide sequence ID" value="NC_010079.1"/>
</dbReference>
<dbReference type="KEGG" id="sax:USA300HOU_2505"/>
<dbReference type="HOGENOM" id="CLU_028392_2_0_9"/>
<dbReference type="UniPathway" id="UPA00138"/>
<dbReference type="GO" id="GO:0042132">
    <property type="term" value="F:fructose 1,6-bisphosphate 1-phosphatase activity"/>
    <property type="evidence" value="ECO:0007669"/>
    <property type="project" value="UniProtKB-UniRule"/>
</dbReference>
<dbReference type="GO" id="GO:0006094">
    <property type="term" value="P:gluconeogenesis"/>
    <property type="evidence" value="ECO:0007669"/>
    <property type="project" value="UniProtKB-UniRule"/>
</dbReference>
<dbReference type="Gene3D" id="3.60.21.10">
    <property type="match status" value="1"/>
</dbReference>
<dbReference type="HAMAP" id="MF_01854">
    <property type="entry name" value="FBPase_class3"/>
    <property type="match status" value="1"/>
</dbReference>
<dbReference type="InterPro" id="IPR009164">
    <property type="entry name" value="FBPtase_class3"/>
</dbReference>
<dbReference type="InterPro" id="IPR029052">
    <property type="entry name" value="Metallo-depent_PP-like"/>
</dbReference>
<dbReference type="Pfam" id="PF06874">
    <property type="entry name" value="FBPase_2"/>
    <property type="match status" value="1"/>
</dbReference>
<dbReference type="PIRSF" id="PIRSF000906">
    <property type="entry name" value="FBPtase_Bacill"/>
    <property type="match status" value="1"/>
</dbReference>
<dbReference type="SUPFAM" id="SSF56300">
    <property type="entry name" value="Metallo-dependent phosphatases"/>
    <property type="match status" value="2"/>
</dbReference>